<name>METXS_PSE14</name>
<keyword id="KW-0012">Acyltransferase</keyword>
<keyword id="KW-0028">Amino-acid biosynthesis</keyword>
<keyword id="KW-0963">Cytoplasm</keyword>
<keyword id="KW-0486">Methionine biosynthesis</keyword>
<keyword id="KW-0808">Transferase</keyword>
<dbReference type="EC" id="2.3.1.46" evidence="1"/>
<dbReference type="EMBL" id="CP000058">
    <property type="protein sequence ID" value="AAZ34858.1"/>
    <property type="molecule type" value="Genomic_DNA"/>
</dbReference>
<dbReference type="SMR" id="Q48PA1"/>
<dbReference type="ESTHER" id="psesm-METX">
    <property type="family name" value="Homoserine_transacetylase"/>
</dbReference>
<dbReference type="KEGG" id="psp:PSPPH_0465"/>
<dbReference type="eggNOG" id="COG2021">
    <property type="taxonomic scope" value="Bacteria"/>
</dbReference>
<dbReference type="HOGENOM" id="CLU_028760_1_2_6"/>
<dbReference type="UniPathway" id="UPA00051">
    <property type="reaction ID" value="UER00075"/>
</dbReference>
<dbReference type="Proteomes" id="UP000000551">
    <property type="component" value="Chromosome"/>
</dbReference>
<dbReference type="GO" id="GO:0005737">
    <property type="term" value="C:cytoplasm"/>
    <property type="evidence" value="ECO:0007669"/>
    <property type="project" value="UniProtKB-SubCell"/>
</dbReference>
<dbReference type="GO" id="GO:0004414">
    <property type="term" value="F:homoserine O-acetyltransferase activity"/>
    <property type="evidence" value="ECO:0007669"/>
    <property type="project" value="TreeGrafter"/>
</dbReference>
<dbReference type="GO" id="GO:0008899">
    <property type="term" value="F:homoserine O-succinyltransferase activity"/>
    <property type="evidence" value="ECO:0007669"/>
    <property type="project" value="UniProtKB-UniRule"/>
</dbReference>
<dbReference type="GO" id="GO:0009092">
    <property type="term" value="P:homoserine metabolic process"/>
    <property type="evidence" value="ECO:0007669"/>
    <property type="project" value="TreeGrafter"/>
</dbReference>
<dbReference type="GO" id="GO:0009086">
    <property type="term" value="P:methionine biosynthetic process"/>
    <property type="evidence" value="ECO:0007669"/>
    <property type="project" value="UniProtKB-UniRule"/>
</dbReference>
<dbReference type="FunFam" id="1.10.1740.110:FF:000001">
    <property type="entry name" value="Homoserine O-acetyltransferase"/>
    <property type="match status" value="1"/>
</dbReference>
<dbReference type="Gene3D" id="1.10.1740.110">
    <property type="match status" value="1"/>
</dbReference>
<dbReference type="Gene3D" id="3.40.50.1820">
    <property type="entry name" value="alpha/beta hydrolase"/>
    <property type="match status" value="1"/>
</dbReference>
<dbReference type="HAMAP" id="MF_00296">
    <property type="entry name" value="MetX_acyltransf"/>
    <property type="match status" value="1"/>
</dbReference>
<dbReference type="InterPro" id="IPR000073">
    <property type="entry name" value="AB_hydrolase_1"/>
</dbReference>
<dbReference type="InterPro" id="IPR029058">
    <property type="entry name" value="AB_hydrolase_fold"/>
</dbReference>
<dbReference type="InterPro" id="IPR008220">
    <property type="entry name" value="HAT_MetX-like"/>
</dbReference>
<dbReference type="NCBIfam" id="TIGR01392">
    <property type="entry name" value="homoserO_Ac_trn"/>
    <property type="match status" value="1"/>
</dbReference>
<dbReference type="NCBIfam" id="NF001209">
    <property type="entry name" value="PRK00175.1"/>
    <property type="match status" value="1"/>
</dbReference>
<dbReference type="PANTHER" id="PTHR32268">
    <property type="entry name" value="HOMOSERINE O-ACETYLTRANSFERASE"/>
    <property type="match status" value="1"/>
</dbReference>
<dbReference type="PANTHER" id="PTHR32268:SF11">
    <property type="entry name" value="HOMOSERINE O-ACETYLTRANSFERASE"/>
    <property type="match status" value="1"/>
</dbReference>
<dbReference type="Pfam" id="PF00561">
    <property type="entry name" value="Abhydrolase_1"/>
    <property type="match status" value="1"/>
</dbReference>
<dbReference type="PIRSF" id="PIRSF000443">
    <property type="entry name" value="Homoser_Ac_trans"/>
    <property type="match status" value="1"/>
</dbReference>
<dbReference type="SUPFAM" id="SSF53474">
    <property type="entry name" value="alpha/beta-Hydrolases"/>
    <property type="match status" value="1"/>
</dbReference>
<reference key="1">
    <citation type="journal article" date="2005" name="J. Bacteriol.">
        <title>Whole-genome sequence analysis of Pseudomonas syringae pv. phaseolicola 1448A reveals divergence among pathovars in genes involved in virulence and transposition.</title>
        <authorList>
            <person name="Joardar V."/>
            <person name="Lindeberg M."/>
            <person name="Jackson R.W."/>
            <person name="Selengut J."/>
            <person name="Dodson R."/>
            <person name="Brinkac L.M."/>
            <person name="Daugherty S.C."/>
            <person name="DeBoy R.T."/>
            <person name="Durkin A.S."/>
            <person name="Gwinn Giglio M."/>
            <person name="Madupu R."/>
            <person name="Nelson W.C."/>
            <person name="Rosovitz M.J."/>
            <person name="Sullivan S.A."/>
            <person name="Crabtree J."/>
            <person name="Creasy T."/>
            <person name="Davidsen T.M."/>
            <person name="Haft D.H."/>
            <person name="Zafar N."/>
            <person name="Zhou L."/>
            <person name="Halpin R."/>
            <person name="Holley T."/>
            <person name="Khouri H.M."/>
            <person name="Feldblyum T.V."/>
            <person name="White O."/>
            <person name="Fraser C.M."/>
            <person name="Chatterjee A.K."/>
            <person name="Cartinhour S."/>
            <person name="Schneider D."/>
            <person name="Mansfield J.W."/>
            <person name="Collmer A."/>
            <person name="Buell R."/>
        </authorList>
    </citation>
    <scope>NUCLEOTIDE SEQUENCE [LARGE SCALE GENOMIC DNA]</scope>
    <source>
        <strain>1448A / Race 6</strain>
    </source>
</reference>
<organism>
    <name type="scientific">Pseudomonas savastanoi pv. phaseolicola (strain 1448A / Race 6)</name>
    <name type="common">Pseudomonas syringae pv. phaseolicola (strain 1448A / Race 6)</name>
    <dbReference type="NCBI Taxonomy" id="264730"/>
    <lineage>
        <taxon>Bacteria</taxon>
        <taxon>Pseudomonadati</taxon>
        <taxon>Pseudomonadota</taxon>
        <taxon>Gammaproteobacteria</taxon>
        <taxon>Pseudomonadales</taxon>
        <taxon>Pseudomonadaceae</taxon>
        <taxon>Pseudomonas</taxon>
    </lineage>
</organism>
<protein>
    <recommendedName>
        <fullName evidence="1">Homoserine O-succinyltransferase</fullName>
        <shortName evidence="1">HST</shortName>
        <ecNumber evidence="1">2.3.1.46</ecNumber>
    </recommendedName>
    <alternativeName>
        <fullName evidence="1">Homoserine transsuccinylase</fullName>
        <shortName evidence="1">HTS</shortName>
    </alternativeName>
</protein>
<proteinExistence type="inferred from homology"/>
<sequence length="379" mass="41616">MPTVFPHDSVGLVTPQTAHFSEPLALACGRSLPAYDLIYETYGQLNAARSNAVLICHALSGHHHAAGFHSADDRKPGWWDSCIGPGKPIDTNTFFVVSLNNLGGCNGSTGPSSIDPDTGKPLGANFPVVTVEDWVNSQARLADLLGIDTWAAVIGGSLGGMQALQWTISYPDRVRHCLAIASAPKLSAQNIAFNEVARQAILTDPEFHGGSFQERGVIPKRGLMLARMVGHITYLSDDSMGEKFGRGLKSEKLNYDFHSVEFQVESYLRYQGEEFSGRFDANTYLLMTKALDYFDPAANFNDDLAKTFANATAKFCVMSFTTDWRFSPARSRELVDALMAARKDVCYLEIDAPQGHDAFLIPIPRYLQAFGNYMNRISL</sequence>
<feature type="chain" id="PRO_0000231882" description="Homoserine O-succinyltransferase">
    <location>
        <begin position="1"/>
        <end position="379"/>
    </location>
</feature>
<feature type="domain" description="AB hydrolase-1" evidence="1">
    <location>
        <begin position="51"/>
        <end position="360"/>
    </location>
</feature>
<feature type="active site" description="Nucleophile" evidence="1">
    <location>
        <position position="157"/>
    </location>
</feature>
<feature type="active site" evidence="1">
    <location>
        <position position="323"/>
    </location>
</feature>
<feature type="active site" evidence="1">
    <location>
        <position position="356"/>
    </location>
</feature>
<feature type="binding site" evidence="1">
    <location>
        <position position="227"/>
    </location>
    <ligand>
        <name>substrate</name>
    </ligand>
</feature>
<feature type="binding site" evidence="1">
    <location>
        <position position="357"/>
    </location>
    <ligand>
        <name>substrate</name>
    </ligand>
</feature>
<feature type="site" description="Important for acyl-CoA specificity" evidence="1">
    <location>
        <position position="325"/>
    </location>
</feature>
<gene>
    <name evidence="1" type="primary">metXS</name>
    <name type="ordered locus">PSPPH_0465</name>
</gene>
<evidence type="ECO:0000255" key="1">
    <source>
        <dbReference type="HAMAP-Rule" id="MF_00296"/>
    </source>
</evidence>
<comment type="function">
    <text evidence="1">Transfers a succinyl group from succinyl-CoA to L-homoserine, forming succinyl-L-homoserine.</text>
</comment>
<comment type="catalytic activity">
    <reaction evidence="1">
        <text>L-homoserine + succinyl-CoA = O-succinyl-L-homoserine + CoA</text>
        <dbReference type="Rhea" id="RHEA:22008"/>
        <dbReference type="ChEBI" id="CHEBI:57287"/>
        <dbReference type="ChEBI" id="CHEBI:57292"/>
        <dbReference type="ChEBI" id="CHEBI:57476"/>
        <dbReference type="ChEBI" id="CHEBI:57661"/>
        <dbReference type="EC" id="2.3.1.46"/>
    </reaction>
</comment>
<comment type="pathway">
    <text evidence="1">Amino-acid biosynthesis; L-methionine biosynthesis via de novo pathway; O-succinyl-L-homoserine from L-homoserine: step 1/1.</text>
</comment>
<comment type="subunit">
    <text evidence="1">Homodimer.</text>
</comment>
<comment type="subcellular location">
    <subcellularLocation>
        <location evidence="1">Cytoplasm</location>
    </subcellularLocation>
</comment>
<comment type="similarity">
    <text evidence="1">Belongs to the AB hydrolase superfamily. MetX family.</text>
</comment>
<accession>Q48PA1</accession>